<keyword id="KW-0067">ATP-binding</keyword>
<keyword id="KW-0315">Glutamine amidotransferase</keyword>
<keyword id="KW-0332">GMP biosynthesis</keyword>
<keyword id="KW-0436">Ligase</keyword>
<keyword id="KW-0547">Nucleotide-binding</keyword>
<keyword id="KW-0658">Purine biosynthesis</keyword>
<comment type="function">
    <text evidence="1">Catalyzes the synthesis of GMP from XMP.</text>
</comment>
<comment type="catalytic activity">
    <reaction evidence="1">
        <text>XMP + L-glutamine + ATP + H2O = GMP + L-glutamate + AMP + diphosphate + 2 H(+)</text>
        <dbReference type="Rhea" id="RHEA:11680"/>
        <dbReference type="ChEBI" id="CHEBI:15377"/>
        <dbReference type="ChEBI" id="CHEBI:15378"/>
        <dbReference type="ChEBI" id="CHEBI:29985"/>
        <dbReference type="ChEBI" id="CHEBI:30616"/>
        <dbReference type="ChEBI" id="CHEBI:33019"/>
        <dbReference type="ChEBI" id="CHEBI:57464"/>
        <dbReference type="ChEBI" id="CHEBI:58115"/>
        <dbReference type="ChEBI" id="CHEBI:58359"/>
        <dbReference type="ChEBI" id="CHEBI:456215"/>
        <dbReference type="EC" id="6.3.5.2"/>
    </reaction>
</comment>
<comment type="pathway">
    <text evidence="1">Purine metabolism; GMP biosynthesis; GMP from XMP (L-Gln route): step 1/1.</text>
</comment>
<comment type="subunit">
    <text evidence="1">Homodimer.</text>
</comment>
<proteinExistence type="inferred from homology"/>
<organism>
    <name type="scientific">Escherichia coli (strain K12 / MC4100 / BW2952)</name>
    <dbReference type="NCBI Taxonomy" id="595496"/>
    <lineage>
        <taxon>Bacteria</taxon>
        <taxon>Pseudomonadati</taxon>
        <taxon>Pseudomonadota</taxon>
        <taxon>Gammaproteobacteria</taxon>
        <taxon>Enterobacterales</taxon>
        <taxon>Enterobacteriaceae</taxon>
        <taxon>Escherichia</taxon>
    </lineage>
</organism>
<dbReference type="EC" id="6.3.5.2" evidence="1"/>
<dbReference type="EMBL" id="CP001396">
    <property type="protein sequence ID" value="ACR63382.1"/>
    <property type="molecule type" value="Genomic_DNA"/>
</dbReference>
<dbReference type="RefSeq" id="WP_000138270.1">
    <property type="nucleotide sequence ID" value="NC_012759.1"/>
</dbReference>
<dbReference type="SMR" id="C4ZX82"/>
<dbReference type="MEROPS" id="C26.957"/>
<dbReference type="KEGG" id="ebw:BWG_2271"/>
<dbReference type="HOGENOM" id="CLU_014340_0_5_6"/>
<dbReference type="UniPathway" id="UPA00189">
    <property type="reaction ID" value="UER00296"/>
</dbReference>
<dbReference type="GO" id="GO:0005829">
    <property type="term" value="C:cytosol"/>
    <property type="evidence" value="ECO:0007669"/>
    <property type="project" value="TreeGrafter"/>
</dbReference>
<dbReference type="GO" id="GO:0005524">
    <property type="term" value="F:ATP binding"/>
    <property type="evidence" value="ECO:0007669"/>
    <property type="project" value="UniProtKB-UniRule"/>
</dbReference>
<dbReference type="GO" id="GO:0003921">
    <property type="term" value="F:GMP synthase activity"/>
    <property type="evidence" value="ECO:0007669"/>
    <property type="project" value="InterPro"/>
</dbReference>
<dbReference type="CDD" id="cd01742">
    <property type="entry name" value="GATase1_GMP_Synthase"/>
    <property type="match status" value="1"/>
</dbReference>
<dbReference type="CDD" id="cd01997">
    <property type="entry name" value="GMP_synthase_C"/>
    <property type="match status" value="1"/>
</dbReference>
<dbReference type="FunFam" id="3.30.300.10:FF:000002">
    <property type="entry name" value="GMP synthase [glutamine-hydrolyzing]"/>
    <property type="match status" value="1"/>
</dbReference>
<dbReference type="FunFam" id="3.40.50.620:FF:000001">
    <property type="entry name" value="GMP synthase [glutamine-hydrolyzing]"/>
    <property type="match status" value="1"/>
</dbReference>
<dbReference type="FunFam" id="3.40.50.880:FF:000001">
    <property type="entry name" value="GMP synthase [glutamine-hydrolyzing]"/>
    <property type="match status" value="1"/>
</dbReference>
<dbReference type="Gene3D" id="3.30.300.10">
    <property type="match status" value="1"/>
</dbReference>
<dbReference type="Gene3D" id="3.40.50.880">
    <property type="match status" value="1"/>
</dbReference>
<dbReference type="Gene3D" id="3.40.50.620">
    <property type="entry name" value="HUPs"/>
    <property type="match status" value="1"/>
</dbReference>
<dbReference type="HAMAP" id="MF_00344">
    <property type="entry name" value="GMP_synthase"/>
    <property type="match status" value="1"/>
</dbReference>
<dbReference type="InterPro" id="IPR029062">
    <property type="entry name" value="Class_I_gatase-like"/>
</dbReference>
<dbReference type="InterPro" id="IPR017926">
    <property type="entry name" value="GATASE"/>
</dbReference>
<dbReference type="InterPro" id="IPR001674">
    <property type="entry name" value="GMP_synth_C"/>
</dbReference>
<dbReference type="InterPro" id="IPR004739">
    <property type="entry name" value="GMP_synth_GATase"/>
</dbReference>
<dbReference type="InterPro" id="IPR022955">
    <property type="entry name" value="GMP_synthase"/>
</dbReference>
<dbReference type="InterPro" id="IPR025777">
    <property type="entry name" value="GMPS_ATP_PPase_dom"/>
</dbReference>
<dbReference type="InterPro" id="IPR022310">
    <property type="entry name" value="NAD/GMP_synthase"/>
</dbReference>
<dbReference type="InterPro" id="IPR014729">
    <property type="entry name" value="Rossmann-like_a/b/a_fold"/>
</dbReference>
<dbReference type="NCBIfam" id="TIGR00884">
    <property type="entry name" value="guaA_Cterm"/>
    <property type="match status" value="1"/>
</dbReference>
<dbReference type="NCBIfam" id="TIGR00888">
    <property type="entry name" value="guaA_Nterm"/>
    <property type="match status" value="1"/>
</dbReference>
<dbReference type="NCBIfam" id="NF000848">
    <property type="entry name" value="PRK00074.1"/>
    <property type="match status" value="1"/>
</dbReference>
<dbReference type="PANTHER" id="PTHR11922:SF2">
    <property type="entry name" value="GMP SYNTHASE [GLUTAMINE-HYDROLYZING]"/>
    <property type="match status" value="1"/>
</dbReference>
<dbReference type="PANTHER" id="PTHR11922">
    <property type="entry name" value="GMP SYNTHASE-RELATED"/>
    <property type="match status" value="1"/>
</dbReference>
<dbReference type="Pfam" id="PF00117">
    <property type="entry name" value="GATase"/>
    <property type="match status" value="1"/>
</dbReference>
<dbReference type="Pfam" id="PF00958">
    <property type="entry name" value="GMP_synt_C"/>
    <property type="match status" value="1"/>
</dbReference>
<dbReference type="Pfam" id="PF02540">
    <property type="entry name" value="NAD_synthase"/>
    <property type="match status" value="1"/>
</dbReference>
<dbReference type="PRINTS" id="PR00097">
    <property type="entry name" value="ANTSNTHASEII"/>
</dbReference>
<dbReference type="PRINTS" id="PR00099">
    <property type="entry name" value="CPSGATASE"/>
</dbReference>
<dbReference type="PRINTS" id="PR00096">
    <property type="entry name" value="GATASE"/>
</dbReference>
<dbReference type="SUPFAM" id="SSF52402">
    <property type="entry name" value="Adenine nucleotide alpha hydrolases-like"/>
    <property type="match status" value="1"/>
</dbReference>
<dbReference type="SUPFAM" id="SSF52317">
    <property type="entry name" value="Class I glutamine amidotransferase-like"/>
    <property type="match status" value="1"/>
</dbReference>
<dbReference type="SUPFAM" id="SSF54810">
    <property type="entry name" value="GMP synthetase C-terminal dimerisation domain"/>
    <property type="match status" value="1"/>
</dbReference>
<dbReference type="PROSITE" id="PS51273">
    <property type="entry name" value="GATASE_TYPE_1"/>
    <property type="match status" value="1"/>
</dbReference>
<dbReference type="PROSITE" id="PS51553">
    <property type="entry name" value="GMPS_ATP_PPASE"/>
    <property type="match status" value="1"/>
</dbReference>
<evidence type="ECO:0000255" key="1">
    <source>
        <dbReference type="HAMAP-Rule" id="MF_00344"/>
    </source>
</evidence>
<sequence length="525" mass="58679">MTENIHKHRILILDFGSQYTQLVARRVRELGVYCELWAWDVTEAQIRDFNPSGIILSGGPESTTEENSPRAPQYVFEAGVPVFGVCYGMQTMAMQLGGHVEASNEREFGYAQVEVVNDSALVRGIEDALTADGKPLLDVWMSHGDKVTAIPSDFITVASTESCPFAIMANEEKRFYGVQFHPEVTHTRQGMRMLERFVRDICQCEALWTPAKIIDDAVARIREQVGDDKVILGLSGGVDSSVTAMLLHRAIGKNLTCVFVDNGLLRLNEAEQVLDMFGDHFGLNIVHVPAEDRFLSALAGENDPEAKRKIIGRVFVEVFDEEALKLEDVKWLAQGTIYPDVIESAASATGKAHVIKSHHNVGGLPKEMKMGLVEPLKELFKDEVRKIGLELGLPYDMLYRHPFPGPGLGVRVLGEVKKEYCDLLRRADAIFIEELRKADLYDKVSQAFTVFLPVRSVGVMGDGRKYDWVVSLRAVETIDFMTAHWAHLPYDFLGRVSNRIINEVNGISRVVYDISGKPPATIEWE</sequence>
<feature type="chain" id="PRO_1000205300" description="GMP synthase [glutamine-hydrolyzing]">
    <location>
        <begin position="1"/>
        <end position="525"/>
    </location>
</feature>
<feature type="domain" description="Glutamine amidotransferase type-1" evidence="1">
    <location>
        <begin position="9"/>
        <end position="207"/>
    </location>
</feature>
<feature type="domain" description="GMPS ATP-PPase" evidence="1">
    <location>
        <begin position="208"/>
        <end position="400"/>
    </location>
</feature>
<feature type="active site" description="Nucleophile" evidence="1">
    <location>
        <position position="86"/>
    </location>
</feature>
<feature type="active site" evidence="1">
    <location>
        <position position="181"/>
    </location>
</feature>
<feature type="active site" evidence="1">
    <location>
        <position position="183"/>
    </location>
</feature>
<feature type="binding site" evidence="1">
    <location>
        <begin position="235"/>
        <end position="241"/>
    </location>
    <ligand>
        <name>ATP</name>
        <dbReference type="ChEBI" id="CHEBI:30616"/>
    </ligand>
</feature>
<gene>
    <name evidence="1" type="primary">guaA</name>
    <name type="ordered locus">BWG_2271</name>
</gene>
<protein>
    <recommendedName>
        <fullName evidence="1">GMP synthase [glutamine-hydrolyzing]</fullName>
        <ecNumber evidence="1">6.3.5.2</ecNumber>
    </recommendedName>
    <alternativeName>
        <fullName evidence="1">GMP synthetase</fullName>
    </alternativeName>
    <alternativeName>
        <fullName evidence="1">Glutamine amidotransferase</fullName>
    </alternativeName>
</protein>
<name>GUAA_ECOBW</name>
<reference key="1">
    <citation type="journal article" date="2009" name="J. Bacteriol.">
        <title>Genomic sequencing reveals regulatory mutations and recombinational events in the widely used MC4100 lineage of Escherichia coli K-12.</title>
        <authorList>
            <person name="Ferenci T."/>
            <person name="Zhou Z."/>
            <person name="Betteridge T."/>
            <person name="Ren Y."/>
            <person name="Liu Y."/>
            <person name="Feng L."/>
            <person name="Reeves P.R."/>
            <person name="Wang L."/>
        </authorList>
    </citation>
    <scope>NUCLEOTIDE SEQUENCE [LARGE SCALE GENOMIC DNA]</scope>
    <source>
        <strain>K12 / MC4100 / BW2952</strain>
    </source>
</reference>
<accession>C4ZX82</accession>